<comment type="function">
    <text evidence="1">Co-chaperone that binds to the molecular chaperone Hsp70 and regulates Hsp70 ATPase activity.</text>
</comment>
<comment type="subcellular location">
    <subcellularLocation>
        <location evidence="3">Cytoplasm</location>
    </subcellularLocation>
    <subcellularLocation>
        <location evidence="3">Nucleus</location>
    </subcellularLocation>
</comment>
<comment type="similarity">
    <text evidence="4">Belongs to the SGT family.</text>
</comment>
<feature type="chain" id="PRO_0000363377" description="Small glutamine-rich tetratricopeptide repeat-containing protein 2">
    <location>
        <begin position="1"/>
        <end position="317"/>
    </location>
</feature>
<feature type="repeat" description="TPR 1">
    <location>
        <begin position="14"/>
        <end position="48"/>
    </location>
</feature>
<feature type="repeat" description="TPR 2">
    <location>
        <begin position="83"/>
        <end position="116"/>
    </location>
</feature>
<feature type="repeat" description="TPR 3">
    <location>
        <begin position="118"/>
        <end position="150"/>
    </location>
</feature>
<feature type="repeat" description="TPR 4">
    <location>
        <begin position="151"/>
        <end position="184"/>
    </location>
</feature>
<feature type="region of interest" description="Disordered" evidence="2">
    <location>
        <begin position="198"/>
        <end position="224"/>
    </location>
</feature>
<feature type="region of interest" description="Disordered" evidence="2">
    <location>
        <begin position="298"/>
        <end position="317"/>
    </location>
</feature>
<feature type="compositionally biased region" description="Polar residues" evidence="2">
    <location>
        <begin position="198"/>
        <end position="215"/>
    </location>
</feature>
<proteinExistence type="inferred from homology"/>
<reference key="1">
    <citation type="journal article" date="2002" name="Nature">
        <title>The genome sequence of Schizosaccharomyces pombe.</title>
        <authorList>
            <person name="Wood V."/>
            <person name="Gwilliam R."/>
            <person name="Rajandream M.A."/>
            <person name="Lyne M.H."/>
            <person name="Lyne R."/>
            <person name="Stewart A."/>
            <person name="Sgouros J.G."/>
            <person name="Peat N."/>
            <person name="Hayles J."/>
            <person name="Baker S.G."/>
            <person name="Basham D."/>
            <person name="Bowman S."/>
            <person name="Brooks K."/>
            <person name="Brown D."/>
            <person name="Brown S."/>
            <person name="Chillingworth T."/>
            <person name="Churcher C.M."/>
            <person name="Collins M."/>
            <person name="Connor R."/>
            <person name="Cronin A."/>
            <person name="Davis P."/>
            <person name="Feltwell T."/>
            <person name="Fraser A."/>
            <person name="Gentles S."/>
            <person name="Goble A."/>
            <person name="Hamlin N."/>
            <person name="Harris D.E."/>
            <person name="Hidalgo J."/>
            <person name="Hodgson G."/>
            <person name="Holroyd S."/>
            <person name="Hornsby T."/>
            <person name="Howarth S."/>
            <person name="Huckle E.J."/>
            <person name="Hunt S."/>
            <person name="Jagels K."/>
            <person name="James K.D."/>
            <person name="Jones L."/>
            <person name="Jones M."/>
            <person name="Leather S."/>
            <person name="McDonald S."/>
            <person name="McLean J."/>
            <person name="Mooney P."/>
            <person name="Moule S."/>
            <person name="Mungall K.L."/>
            <person name="Murphy L.D."/>
            <person name="Niblett D."/>
            <person name="Odell C."/>
            <person name="Oliver K."/>
            <person name="O'Neil S."/>
            <person name="Pearson D."/>
            <person name="Quail M.A."/>
            <person name="Rabbinowitsch E."/>
            <person name="Rutherford K.M."/>
            <person name="Rutter S."/>
            <person name="Saunders D."/>
            <person name="Seeger K."/>
            <person name="Sharp S."/>
            <person name="Skelton J."/>
            <person name="Simmonds M.N."/>
            <person name="Squares R."/>
            <person name="Squares S."/>
            <person name="Stevens K."/>
            <person name="Taylor K."/>
            <person name="Taylor R.G."/>
            <person name="Tivey A."/>
            <person name="Walsh S.V."/>
            <person name="Warren T."/>
            <person name="Whitehead S."/>
            <person name="Woodward J.R."/>
            <person name="Volckaert G."/>
            <person name="Aert R."/>
            <person name="Robben J."/>
            <person name="Grymonprez B."/>
            <person name="Weltjens I."/>
            <person name="Vanstreels E."/>
            <person name="Rieger M."/>
            <person name="Schaefer M."/>
            <person name="Mueller-Auer S."/>
            <person name="Gabel C."/>
            <person name="Fuchs M."/>
            <person name="Duesterhoeft A."/>
            <person name="Fritzc C."/>
            <person name="Holzer E."/>
            <person name="Moestl D."/>
            <person name="Hilbert H."/>
            <person name="Borzym K."/>
            <person name="Langer I."/>
            <person name="Beck A."/>
            <person name="Lehrach H."/>
            <person name="Reinhardt R."/>
            <person name="Pohl T.M."/>
            <person name="Eger P."/>
            <person name="Zimmermann W."/>
            <person name="Wedler H."/>
            <person name="Wambutt R."/>
            <person name="Purnelle B."/>
            <person name="Goffeau A."/>
            <person name="Cadieu E."/>
            <person name="Dreano S."/>
            <person name="Gloux S."/>
            <person name="Lelaure V."/>
            <person name="Mottier S."/>
            <person name="Galibert F."/>
            <person name="Aves S.J."/>
            <person name="Xiang Z."/>
            <person name="Hunt C."/>
            <person name="Moore K."/>
            <person name="Hurst S.M."/>
            <person name="Lucas M."/>
            <person name="Rochet M."/>
            <person name="Gaillardin C."/>
            <person name="Tallada V.A."/>
            <person name="Garzon A."/>
            <person name="Thode G."/>
            <person name="Daga R.R."/>
            <person name="Cruzado L."/>
            <person name="Jimenez J."/>
            <person name="Sanchez M."/>
            <person name="del Rey F."/>
            <person name="Benito J."/>
            <person name="Dominguez A."/>
            <person name="Revuelta J.L."/>
            <person name="Moreno S."/>
            <person name="Armstrong J."/>
            <person name="Forsburg S.L."/>
            <person name="Cerutti L."/>
            <person name="Lowe T."/>
            <person name="McCombie W.R."/>
            <person name="Paulsen I."/>
            <person name="Potashkin J."/>
            <person name="Shpakovski G.V."/>
            <person name="Ussery D."/>
            <person name="Barrell B.G."/>
            <person name="Nurse P."/>
        </authorList>
    </citation>
    <scope>NUCLEOTIDE SEQUENCE [LARGE SCALE GENOMIC DNA]</scope>
    <source>
        <strain>972 / ATCC 24843</strain>
    </source>
</reference>
<reference key="2">
    <citation type="journal article" date="2006" name="Nat. Biotechnol.">
        <title>ORFeome cloning and global analysis of protein localization in the fission yeast Schizosaccharomyces pombe.</title>
        <authorList>
            <person name="Matsuyama A."/>
            <person name="Arai R."/>
            <person name="Yashiroda Y."/>
            <person name="Shirai A."/>
            <person name="Kamata A."/>
            <person name="Sekido S."/>
            <person name="Kobayashi Y."/>
            <person name="Hashimoto A."/>
            <person name="Hamamoto M."/>
            <person name="Hiraoka Y."/>
            <person name="Horinouchi S."/>
            <person name="Yoshida M."/>
        </authorList>
    </citation>
    <scope>SUBCELLULAR LOCATION [LARGE SCALE ANALYSIS]</scope>
</reference>
<gene>
    <name type="primary">sgt2</name>
    <name type="ORF">SPAC1142.02c</name>
    <name type="ORF">SPAC17G6.19c</name>
</gene>
<organism>
    <name type="scientific">Schizosaccharomyces pombe (strain 972 / ATCC 24843)</name>
    <name type="common">Fission yeast</name>
    <dbReference type="NCBI Taxonomy" id="284812"/>
    <lineage>
        <taxon>Eukaryota</taxon>
        <taxon>Fungi</taxon>
        <taxon>Dikarya</taxon>
        <taxon>Ascomycota</taxon>
        <taxon>Taphrinomycotina</taxon>
        <taxon>Schizosaccharomycetes</taxon>
        <taxon>Schizosaccharomycetales</taxon>
        <taxon>Schizosaccharomycetaceae</taxon>
        <taxon>Schizosaccharomyces</taxon>
    </lineage>
</organism>
<keyword id="KW-0143">Chaperone</keyword>
<keyword id="KW-0963">Cytoplasm</keyword>
<keyword id="KW-0539">Nucleus</keyword>
<keyword id="KW-1185">Reference proteome</keyword>
<keyword id="KW-0677">Repeat</keyword>
<keyword id="KW-0802">TPR repeat</keyword>
<accession>O13797</accession>
<dbReference type="EMBL" id="CU329670">
    <property type="protein sequence ID" value="CAB77009.1"/>
    <property type="molecule type" value="Genomic_DNA"/>
</dbReference>
<dbReference type="PIR" id="T37851">
    <property type="entry name" value="T37851"/>
</dbReference>
<dbReference type="RefSeq" id="XP_001713087.1">
    <property type="nucleotide sequence ID" value="XM_001713035.2"/>
</dbReference>
<dbReference type="SMR" id="O13797"/>
<dbReference type="BioGRID" id="278865">
    <property type="interactions" value="18"/>
</dbReference>
<dbReference type="FunCoup" id="O13797">
    <property type="interactions" value="159"/>
</dbReference>
<dbReference type="STRING" id="284812.O13797"/>
<dbReference type="iPTMnet" id="O13797"/>
<dbReference type="PaxDb" id="4896-SPAC1142.02c.1"/>
<dbReference type="EnsemblFungi" id="SPAC1142.02c.1">
    <property type="protein sequence ID" value="SPAC1142.02c.1:pep"/>
    <property type="gene ID" value="SPAC1142.02c"/>
</dbReference>
<dbReference type="PomBase" id="SPAC1142.02c">
    <property type="gene designation" value="sgt2"/>
</dbReference>
<dbReference type="VEuPathDB" id="FungiDB:SPAC1142.02c"/>
<dbReference type="eggNOG" id="KOG0553">
    <property type="taxonomic scope" value="Eukaryota"/>
</dbReference>
<dbReference type="HOGENOM" id="CLU_044224_1_1_1"/>
<dbReference type="InParanoid" id="O13797"/>
<dbReference type="OMA" id="LAIKDCH"/>
<dbReference type="PhylomeDB" id="O13797"/>
<dbReference type="Reactome" id="R-SPO-9609523">
    <property type="pathway name" value="Insertion of tail-anchored proteins into the endoplasmic reticulum membrane"/>
</dbReference>
<dbReference type="PRO" id="PR:O13797"/>
<dbReference type="Proteomes" id="UP000002485">
    <property type="component" value="Chromosome I"/>
</dbReference>
<dbReference type="GO" id="GO:0005829">
    <property type="term" value="C:cytosol"/>
    <property type="evidence" value="ECO:0007005"/>
    <property type="project" value="PomBase"/>
</dbReference>
<dbReference type="GO" id="GO:0016020">
    <property type="term" value="C:membrane"/>
    <property type="evidence" value="ECO:0000318"/>
    <property type="project" value="GO_Central"/>
</dbReference>
<dbReference type="GO" id="GO:0005634">
    <property type="term" value="C:nucleus"/>
    <property type="evidence" value="ECO:0007669"/>
    <property type="project" value="UniProtKB-SubCell"/>
</dbReference>
<dbReference type="GO" id="GO:0072380">
    <property type="term" value="C:TRC complex"/>
    <property type="evidence" value="ECO:0000318"/>
    <property type="project" value="GO_Central"/>
</dbReference>
<dbReference type="GO" id="GO:0032977">
    <property type="term" value="F:membrane insertase activity"/>
    <property type="evidence" value="ECO:0000304"/>
    <property type="project" value="PomBase"/>
</dbReference>
<dbReference type="GO" id="GO:0060090">
    <property type="term" value="F:molecular adaptor activity"/>
    <property type="evidence" value="ECO:0000318"/>
    <property type="project" value="GO_Central"/>
</dbReference>
<dbReference type="GO" id="GO:0006620">
    <property type="term" value="P:post-translational protein targeting to endoplasmic reticulum membrane"/>
    <property type="evidence" value="ECO:0000318"/>
    <property type="project" value="GO_Central"/>
</dbReference>
<dbReference type="FunFam" id="1.25.40.10:FF:000207">
    <property type="entry name" value="Small glutamine-rich tetratricopeptide repeat-containing protein"/>
    <property type="match status" value="1"/>
</dbReference>
<dbReference type="Gene3D" id="1.20.5.420">
    <property type="entry name" value="Immunoglobulin FC, subunit C"/>
    <property type="match status" value="1"/>
</dbReference>
<dbReference type="Gene3D" id="1.25.40.10">
    <property type="entry name" value="Tetratricopeptide repeat domain"/>
    <property type="match status" value="1"/>
</dbReference>
<dbReference type="InterPro" id="IPR047150">
    <property type="entry name" value="SGT"/>
</dbReference>
<dbReference type="InterPro" id="IPR032374">
    <property type="entry name" value="SGTA_dimer"/>
</dbReference>
<dbReference type="InterPro" id="IPR011990">
    <property type="entry name" value="TPR-like_helical_dom_sf"/>
</dbReference>
<dbReference type="InterPro" id="IPR019734">
    <property type="entry name" value="TPR_rpt"/>
</dbReference>
<dbReference type="PANTHER" id="PTHR45831">
    <property type="entry name" value="LD24721P"/>
    <property type="match status" value="1"/>
</dbReference>
<dbReference type="PANTHER" id="PTHR45831:SF2">
    <property type="entry name" value="LD24721P"/>
    <property type="match status" value="1"/>
</dbReference>
<dbReference type="Pfam" id="PF16546">
    <property type="entry name" value="SGTA_dimer"/>
    <property type="match status" value="1"/>
</dbReference>
<dbReference type="Pfam" id="PF13431">
    <property type="entry name" value="TPR_17"/>
    <property type="match status" value="1"/>
</dbReference>
<dbReference type="Pfam" id="PF13181">
    <property type="entry name" value="TPR_8"/>
    <property type="match status" value="1"/>
</dbReference>
<dbReference type="SMART" id="SM00028">
    <property type="entry name" value="TPR"/>
    <property type="match status" value="3"/>
</dbReference>
<dbReference type="SUPFAM" id="SSF48452">
    <property type="entry name" value="TPR-like"/>
    <property type="match status" value="1"/>
</dbReference>
<dbReference type="PROSITE" id="PS50005">
    <property type="entry name" value="TPR"/>
    <property type="match status" value="3"/>
</dbReference>
<dbReference type="PROSITE" id="PS50293">
    <property type="entry name" value="TPR_REGION"/>
    <property type="match status" value="1"/>
</dbReference>
<sequence length="317" mass="34002">MSSNKVTAAIIDYLKQAITTGSISEEEKESLEVAAQCIQDSFKIKPEEIKPKSGDRLVAAFEEYEKLHPVEEDSTAHVNKEEAEKLKLEGNNAIAAKDYQKALDLYTKAIEIDPTSPVYYSNRAAAYNQLGQFENAVEDALTCLSLDPHHARAFGRLGRAKLSLGDAAAAADAYKKGLDFDPNNEVLKRGLEAANKQLNQPSDSSATSGADQARTSAGAAPDLGSIFGGGMPDLGSLMNNPAVMNMARNLMQSGALNNIMNDPNIANMARNFQSGGGMPDLSSLANNPQLQNLARNFMNNNNNGNTDNNNQGNPPPQ</sequence>
<name>SGT2_SCHPO</name>
<evidence type="ECO:0000250" key="1"/>
<evidence type="ECO:0000256" key="2">
    <source>
        <dbReference type="SAM" id="MobiDB-lite"/>
    </source>
</evidence>
<evidence type="ECO:0000269" key="3">
    <source>
    </source>
</evidence>
<evidence type="ECO:0000305" key="4"/>
<protein>
    <recommendedName>
        <fullName>Small glutamine-rich tetratricopeptide repeat-containing protein 2</fullName>
    </recommendedName>
</protein>